<feature type="chain" id="PRO_0000086439" description="Serine/threonine-protein kinase Nek11">
    <location>
        <begin position="1"/>
        <end position="637"/>
    </location>
</feature>
<feature type="domain" description="Protein kinase" evidence="4">
    <location>
        <begin position="29"/>
        <end position="287"/>
    </location>
</feature>
<feature type="region of interest" description="Disordered" evidence="6">
    <location>
        <begin position="399"/>
        <end position="446"/>
    </location>
</feature>
<feature type="coiled-coil region" evidence="3">
    <location>
        <begin position="302"/>
        <end position="385"/>
    </location>
</feature>
<feature type="compositionally biased region" description="Acidic residues" evidence="6">
    <location>
        <begin position="416"/>
        <end position="434"/>
    </location>
</feature>
<feature type="active site" description="Proton acceptor" evidence="1 4 5">
    <location>
        <position position="158"/>
    </location>
</feature>
<feature type="binding site" evidence="1 4">
    <location>
        <begin position="35"/>
        <end position="43"/>
    </location>
    <ligand>
        <name>ATP</name>
        <dbReference type="ChEBI" id="CHEBI:30616"/>
    </ligand>
</feature>
<feature type="binding site" evidence="2 4">
    <location>
        <position position="61"/>
    </location>
    <ligand>
        <name>ATP</name>
        <dbReference type="ChEBI" id="CHEBI:30616"/>
    </ligand>
</feature>
<feature type="modified residue" description="Phosphoserine; by CHEK1" evidence="2">
    <location>
        <position position="273"/>
    </location>
</feature>
<accession>Q8WNU8</accession>
<evidence type="ECO:0000250" key="1">
    <source>
        <dbReference type="UniProtKB" id="P51957"/>
    </source>
</evidence>
<evidence type="ECO:0000250" key="2">
    <source>
        <dbReference type="UniProtKB" id="Q8NG66"/>
    </source>
</evidence>
<evidence type="ECO:0000255" key="3"/>
<evidence type="ECO:0000255" key="4">
    <source>
        <dbReference type="PROSITE-ProRule" id="PRU00159"/>
    </source>
</evidence>
<evidence type="ECO:0000255" key="5">
    <source>
        <dbReference type="PROSITE-ProRule" id="PRU10027"/>
    </source>
</evidence>
<evidence type="ECO:0000256" key="6">
    <source>
        <dbReference type="SAM" id="MobiDB-lite"/>
    </source>
</evidence>
<evidence type="ECO:0000305" key="7"/>
<evidence type="ECO:0000312" key="8">
    <source>
        <dbReference type="EMBL" id="BAB83539.1"/>
    </source>
</evidence>
<keyword id="KW-0067">ATP-binding</keyword>
<keyword id="KW-0131">Cell cycle</keyword>
<keyword id="KW-0175">Coiled coil</keyword>
<keyword id="KW-0418">Kinase</keyword>
<keyword id="KW-0460">Magnesium</keyword>
<keyword id="KW-0464">Manganese</keyword>
<keyword id="KW-0479">Metal-binding</keyword>
<keyword id="KW-0547">Nucleotide-binding</keyword>
<keyword id="KW-0539">Nucleus</keyword>
<keyword id="KW-0597">Phosphoprotein</keyword>
<keyword id="KW-1185">Reference proteome</keyword>
<keyword id="KW-0723">Serine/threonine-protein kinase</keyword>
<keyword id="KW-0808">Transferase</keyword>
<sequence length="637" mass="73337">MLKFQEAAKCVSGSTAISTYPKTLIARRYVLQQKLGSGSFGTVYLVSDKKAKRGEELKVLKEISVGELNPNETVQANLEAQLLSKLDHPAIVKFHASFVEQDNFCIITEYCEGRDLDYKIQEYKEAGKIFPDNQIIEWFIQLLLGVDYMHERRILHRDLKSKNIFLKNNLLKIGDFGVSRLLMGSCDLATTLTGTPHYMSPEALKHQGYDTKSDIWSLACILYEMCCMNHAFAGSNFLSIVLKIVEGDTPSLPERYPKELNTIMESMLNKNPSLRPSAIEILKIPYIDEQLQHLMCRHSEMTLEDKNLDCQKEAARLINAMQKRIHLQTLRALSEVQKMTPRERMRLRKLQAADERARKLKKIVEEKYEENSKRMQELRSRNFQQLSVDVLHEKTHLIGMEEKEEQPEGRPSCSPQDEDEERWQDREEEFDEPTLENLSEPQPIPSMDLRKLESIVEDATSDLGYHEIPEDPLVAEEYYADAFDSYCEESDEEEEEIVLAGPEKEIKNEGSQPTYRTNQQDSDIEALARCLENVLGCTSLDTKTIPSMAADVSPGPTIFNSVMARTKMKRMRESAMQKLGTEVFEEVYNYLKRARHQNASEAEIRERLEKVVPRASDCFEVDQLLYFEEQLLITMGK</sequence>
<organism>
    <name type="scientific">Macaca fascicularis</name>
    <name type="common">Crab-eating macaque</name>
    <name type="synonym">Cynomolgus monkey</name>
    <dbReference type="NCBI Taxonomy" id="9541"/>
    <lineage>
        <taxon>Eukaryota</taxon>
        <taxon>Metazoa</taxon>
        <taxon>Chordata</taxon>
        <taxon>Craniata</taxon>
        <taxon>Vertebrata</taxon>
        <taxon>Euteleostomi</taxon>
        <taxon>Mammalia</taxon>
        <taxon>Eutheria</taxon>
        <taxon>Euarchontoglires</taxon>
        <taxon>Primates</taxon>
        <taxon>Haplorrhini</taxon>
        <taxon>Catarrhini</taxon>
        <taxon>Cercopithecidae</taxon>
        <taxon>Cercopithecinae</taxon>
        <taxon>Macaca</taxon>
    </lineage>
</organism>
<protein>
    <recommendedName>
        <fullName>Serine/threonine-protein kinase Nek11</fullName>
        <ecNumber evidence="2">2.7.11.1</ecNumber>
    </recommendedName>
    <alternativeName>
        <fullName>Never in mitosis A-related kinase 11</fullName>
        <shortName>NimA-related protein kinase 11</shortName>
    </alternativeName>
</protein>
<comment type="function">
    <text evidence="2">Protein kinase which plays an important role in the G2/M checkpoint response to DNA damage. Controls degradation of CDC25A by directly phosphorylating it on residues whose phosphorylation is required for BTRC-mediated polyubiquitination and degradation.</text>
</comment>
<comment type="catalytic activity">
    <reaction evidence="2">
        <text>L-seryl-[protein] + ATP = O-phospho-L-seryl-[protein] + ADP + H(+)</text>
        <dbReference type="Rhea" id="RHEA:17989"/>
        <dbReference type="Rhea" id="RHEA-COMP:9863"/>
        <dbReference type="Rhea" id="RHEA-COMP:11604"/>
        <dbReference type="ChEBI" id="CHEBI:15378"/>
        <dbReference type="ChEBI" id="CHEBI:29999"/>
        <dbReference type="ChEBI" id="CHEBI:30616"/>
        <dbReference type="ChEBI" id="CHEBI:83421"/>
        <dbReference type="ChEBI" id="CHEBI:456216"/>
        <dbReference type="EC" id="2.7.11.1"/>
    </reaction>
</comment>
<comment type="catalytic activity">
    <reaction evidence="2">
        <text>L-threonyl-[protein] + ATP = O-phospho-L-threonyl-[protein] + ADP + H(+)</text>
        <dbReference type="Rhea" id="RHEA:46608"/>
        <dbReference type="Rhea" id="RHEA-COMP:11060"/>
        <dbReference type="Rhea" id="RHEA-COMP:11605"/>
        <dbReference type="ChEBI" id="CHEBI:15378"/>
        <dbReference type="ChEBI" id="CHEBI:30013"/>
        <dbReference type="ChEBI" id="CHEBI:30616"/>
        <dbReference type="ChEBI" id="CHEBI:61977"/>
        <dbReference type="ChEBI" id="CHEBI:456216"/>
        <dbReference type="EC" id="2.7.11.1"/>
    </reaction>
</comment>
<comment type="cofactor">
    <cofactor evidence="2">
        <name>Mn(2+)</name>
        <dbReference type="ChEBI" id="CHEBI:29035"/>
    </cofactor>
    <cofactor evidence="2">
        <name>Mg(2+)</name>
        <dbReference type="ChEBI" id="CHEBI:18420"/>
    </cofactor>
</comment>
<comment type="activity regulation">
    <text evidence="2">Autorepressed by intramolecular binding of the C-terminus which dissociates following phosphorylation by NEK2. Activated in response to DNA damage. Inhibited by zinc.</text>
</comment>
<comment type="subunit">
    <text evidence="2">Interacts with NEK2.</text>
</comment>
<comment type="subcellular location">
    <subcellularLocation>
        <location evidence="2">Nucleus</location>
    </subcellularLocation>
    <subcellularLocation>
        <location evidence="2">Nucleus</location>
        <location evidence="2">Nucleolus</location>
    </subcellularLocation>
    <text evidence="2">Nuclear during interphase but moves to the polar microtubules during prometaphase and metaphase. Accumulates in the nucleolus in G1/S-arrested cells.</text>
</comment>
<comment type="PTM">
    <text evidence="2">Phosphorylated by NEK2. Phosphorylation at Ser-273 is important for its activation.</text>
</comment>
<comment type="similarity">
    <text evidence="7">Belongs to the protein kinase superfamily. NEK Ser/Thr protein kinase family. NIMA subfamily.</text>
</comment>
<gene>
    <name type="primary">NEK11</name>
    <name type="ORF">QtsA-11749</name>
</gene>
<proteinExistence type="evidence at transcript level"/>
<dbReference type="EC" id="2.7.11.1" evidence="2"/>
<dbReference type="EMBL" id="AB064997">
    <property type="protein sequence ID" value="BAB83539.1"/>
    <property type="molecule type" value="mRNA"/>
</dbReference>
<dbReference type="RefSeq" id="NP_001270591.1">
    <property type="nucleotide sequence ID" value="NM_001283662.1"/>
</dbReference>
<dbReference type="SMR" id="Q8WNU8"/>
<dbReference type="STRING" id="9541.ENSMFAP00000029143"/>
<dbReference type="eggNOG" id="KOG0589">
    <property type="taxonomic scope" value="Eukaryota"/>
</dbReference>
<dbReference type="Proteomes" id="UP000233100">
    <property type="component" value="Unplaced"/>
</dbReference>
<dbReference type="GO" id="GO:0005730">
    <property type="term" value="C:nucleolus"/>
    <property type="evidence" value="ECO:0000250"/>
    <property type="project" value="UniProtKB"/>
</dbReference>
<dbReference type="GO" id="GO:0005524">
    <property type="term" value="F:ATP binding"/>
    <property type="evidence" value="ECO:0000250"/>
    <property type="project" value="UniProtKB"/>
</dbReference>
<dbReference type="GO" id="GO:0046872">
    <property type="term" value="F:metal ion binding"/>
    <property type="evidence" value="ECO:0007669"/>
    <property type="project" value="UniProtKB-KW"/>
</dbReference>
<dbReference type="GO" id="GO:0106310">
    <property type="term" value="F:protein serine kinase activity"/>
    <property type="evidence" value="ECO:0007669"/>
    <property type="project" value="RHEA"/>
</dbReference>
<dbReference type="GO" id="GO:0004674">
    <property type="term" value="F:protein serine/threonine kinase activity"/>
    <property type="evidence" value="ECO:0000250"/>
    <property type="project" value="UniProtKB"/>
</dbReference>
<dbReference type="GO" id="GO:0035556">
    <property type="term" value="P:intracellular signal transduction"/>
    <property type="evidence" value="ECO:0000250"/>
    <property type="project" value="UniProtKB"/>
</dbReference>
<dbReference type="GO" id="GO:0031573">
    <property type="term" value="P:mitotic intra-S DNA damage checkpoint signaling"/>
    <property type="evidence" value="ECO:0000250"/>
    <property type="project" value="UniProtKB"/>
</dbReference>
<dbReference type="GO" id="GO:0006468">
    <property type="term" value="P:protein phosphorylation"/>
    <property type="evidence" value="ECO:0000250"/>
    <property type="project" value="UniProtKB"/>
</dbReference>
<dbReference type="CDD" id="cd08222">
    <property type="entry name" value="STKc_Nek11"/>
    <property type="match status" value="1"/>
</dbReference>
<dbReference type="FunFam" id="1.10.510.10:FF:000436">
    <property type="entry name" value="NIMA related kinase 11"/>
    <property type="match status" value="1"/>
</dbReference>
<dbReference type="FunFam" id="3.30.200.20:FF:000332">
    <property type="entry name" value="NIMA related kinase 11"/>
    <property type="match status" value="1"/>
</dbReference>
<dbReference type="Gene3D" id="3.30.200.20">
    <property type="entry name" value="Phosphorylase Kinase, domain 1"/>
    <property type="match status" value="1"/>
</dbReference>
<dbReference type="Gene3D" id="1.10.510.10">
    <property type="entry name" value="Transferase(Phosphotransferase) domain 1"/>
    <property type="match status" value="1"/>
</dbReference>
<dbReference type="InterPro" id="IPR011009">
    <property type="entry name" value="Kinase-like_dom_sf"/>
</dbReference>
<dbReference type="InterPro" id="IPR051131">
    <property type="entry name" value="NEK_Ser/Thr_kinase_NIMA"/>
</dbReference>
<dbReference type="InterPro" id="IPR000719">
    <property type="entry name" value="Prot_kinase_dom"/>
</dbReference>
<dbReference type="InterPro" id="IPR008271">
    <property type="entry name" value="Ser/Thr_kinase_AS"/>
</dbReference>
<dbReference type="PANTHER" id="PTHR44899">
    <property type="entry name" value="CAMK FAMILY PROTEIN KINASE"/>
    <property type="match status" value="1"/>
</dbReference>
<dbReference type="PANTHER" id="PTHR44899:SF8">
    <property type="entry name" value="NIMA-RELATED KINASE 11"/>
    <property type="match status" value="1"/>
</dbReference>
<dbReference type="Pfam" id="PF00069">
    <property type="entry name" value="Pkinase"/>
    <property type="match status" value="1"/>
</dbReference>
<dbReference type="SMART" id="SM00220">
    <property type="entry name" value="S_TKc"/>
    <property type="match status" value="1"/>
</dbReference>
<dbReference type="SUPFAM" id="SSF56112">
    <property type="entry name" value="Protein kinase-like (PK-like)"/>
    <property type="match status" value="1"/>
</dbReference>
<dbReference type="PROSITE" id="PS50011">
    <property type="entry name" value="PROTEIN_KINASE_DOM"/>
    <property type="match status" value="1"/>
</dbReference>
<dbReference type="PROSITE" id="PS00108">
    <property type="entry name" value="PROTEIN_KINASE_ST"/>
    <property type="match status" value="1"/>
</dbReference>
<name>NEK11_MACFA</name>
<reference evidence="8" key="1">
    <citation type="journal article" date="2002" name="BMC Genomics">
        <title>Cynomolgus monkey testicular cDNAs for discovery of novel human genes in the human genome sequence.</title>
        <authorList>
            <person name="Osada N."/>
            <person name="Hida M."/>
            <person name="Kusuda J."/>
            <person name="Tanuma R."/>
            <person name="Hirata M."/>
            <person name="Suto Y."/>
            <person name="Hirai M."/>
            <person name="Terao K."/>
            <person name="Sugano S."/>
            <person name="Hashimoto K."/>
        </authorList>
    </citation>
    <scope>NUCLEOTIDE SEQUENCE [LARGE SCALE MRNA]</scope>
    <source>
        <tissue evidence="8">Testis</tissue>
    </source>
</reference>